<accession>O20672</accession>
<accession>O20928</accession>
<evidence type="ECO:0000250" key="1"/>
<evidence type="ECO:0000250" key="2">
    <source>
        <dbReference type="UniProtKB" id="P00157"/>
    </source>
</evidence>
<evidence type="ECO:0000250" key="3">
    <source>
        <dbReference type="UniProtKB" id="P00163"/>
    </source>
</evidence>
<evidence type="ECO:0000255" key="4"/>
<evidence type="ECO:0000255" key="5">
    <source>
        <dbReference type="PROSITE-ProRule" id="PRU00967"/>
    </source>
</evidence>
<evidence type="ECO:0000255" key="6">
    <source>
        <dbReference type="PROSITE-ProRule" id="PRU00968"/>
    </source>
</evidence>
<geneLocation type="mitochondrion"/>
<name>CYB_TOXGO</name>
<gene>
    <name type="primary">MT-CYB</name>
    <name type="synonym">COB</name>
    <name type="synonym">CYTB</name>
    <name type="synonym">MTCYB</name>
</gene>
<dbReference type="EMBL" id="AF015627">
    <property type="protein sequence ID" value="AAB82741.1"/>
    <property type="molecule type" value="mRNA"/>
</dbReference>
<dbReference type="EMBL" id="AF023246">
    <property type="protein sequence ID" value="AAC34138.1"/>
    <property type="molecule type" value="mRNA"/>
</dbReference>
<dbReference type="SMR" id="O20672"/>
<dbReference type="EnsemblProtists" id="TGME49_330000-t26_1">
    <property type="protein sequence ID" value="TGME49_330000-t26_1-p1-CDS1"/>
    <property type="gene ID" value="TGME49_330000"/>
</dbReference>
<dbReference type="VEuPathDB" id="ToxoDB:TGCOUG_364120"/>
<dbReference type="VEuPathDB" id="ToxoDB:TGDOM2_322200"/>
<dbReference type="VEuPathDB" id="ToxoDB:TGFOU_322210"/>
<dbReference type="VEuPathDB" id="ToxoDB:TGGT1_362110"/>
<dbReference type="VEuPathDB" id="ToxoDB:TGGT1_409830"/>
<dbReference type="VEuPathDB" id="ToxoDB:TGMAS_330000"/>
<dbReference type="VEuPathDB" id="ToxoDB:TGME49_330000"/>
<dbReference type="VEuPathDB" id="ToxoDB:TGP89_422500"/>
<dbReference type="VEuPathDB" id="ToxoDB:TGPRC2_423410"/>
<dbReference type="VEuPathDB" id="ToxoDB:TGPRC2_423590"/>
<dbReference type="VEuPathDB" id="ToxoDB:TGRH88_085320"/>
<dbReference type="VEuPathDB" id="ToxoDB:TGRUB_322210"/>
<dbReference type="VEuPathDB" id="ToxoDB:TGRUB_364800"/>
<dbReference type="VEuPathDB" id="ToxoDB:TGVAND_237130"/>
<dbReference type="VEuPathDB" id="ToxoDB:TGVAND_438480"/>
<dbReference type="VEuPathDB" id="ToxoDB:TGVEG_239300B"/>
<dbReference type="VEuPathDB" id="ToxoDB:TGVEG_322200"/>
<dbReference type="GO" id="GO:0005743">
    <property type="term" value="C:mitochondrial inner membrane"/>
    <property type="evidence" value="ECO:0007669"/>
    <property type="project" value="UniProtKB-SubCell"/>
</dbReference>
<dbReference type="GO" id="GO:0046872">
    <property type="term" value="F:metal ion binding"/>
    <property type="evidence" value="ECO:0007669"/>
    <property type="project" value="UniProtKB-KW"/>
</dbReference>
<dbReference type="GO" id="GO:0008121">
    <property type="term" value="F:ubiquinol-cytochrome-c reductase activity"/>
    <property type="evidence" value="ECO:0007669"/>
    <property type="project" value="TreeGrafter"/>
</dbReference>
<dbReference type="GO" id="GO:0006122">
    <property type="term" value="P:mitochondrial electron transport, ubiquinol to cytochrome c"/>
    <property type="evidence" value="ECO:0007669"/>
    <property type="project" value="TreeGrafter"/>
</dbReference>
<dbReference type="CDD" id="cd00284">
    <property type="entry name" value="Cytochrome_b_N"/>
    <property type="match status" value="1"/>
</dbReference>
<dbReference type="Gene3D" id="1.20.810.10">
    <property type="entry name" value="Cytochrome Bc1 Complex, Chain C"/>
    <property type="match status" value="1"/>
</dbReference>
<dbReference type="InterPro" id="IPR005798">
    <property type="entry name" value="Cyt_b/b6_C"/>
</dbReference>
<dbReference type="InterPro" id="IPR036150">
    <property type="entry name" value="Cyt_b/b6_C_sf"/>
</dbReference>
<dbReference type="InterPro" id="IPR005797">
    <property type="entry name" value="Cyt_b/b6_N"/>
</dbReference>
<dbReference type="InterPro" id="IPR027387">
    <property type="entry name" value="Cytb/b6-like_sf"/>
</dbReference>
<dbReference type="InterPro" id="IPR048259">
    <property type="entry name" value="Cytochrome_b_N_euk/bac"/>
</dbReference>
<dbReference type="InterPro" id="IPR016174">
    <property type="entry name" value="Di-haem_cyt_TM"/>
</dbReference>
<dbReference type="PANTHER" id="PTHR19271">
    <property type="entry name" value="CYTOCHROME B"/>
    <property type="match status" value="1"/>
</dbReference>
<dbReference type="PANTHER" id="PTHR19271:SF16">
    <property type="entry name" value="CYTOCHROME B"/>
    <property type="match status" value="1"/>
</dbReference>
<dbReference type="Pfam" id="PF00032">
    <property type="entry name" value="Cytochrom_B_C"/>
    <property type="match status" value="1"/>
</dbReference>
<dbReference type="Pfam" id="PF00033">
    <property type="entry name" value="Cytochrome_B"/>
    <property type="match status" value="1"/>
</dbReference>
<dbReference type="SUPFAM" id="SSF81648">
    <property type="entry name" value="a domain/subunit of cytochrome bc1 complex (Ubiquinol-cytochrome c reductase)"/>
    <property type="match status" value="1"/>
</dbReference>
<dbReference type="SUPFAM" id="SSF81342">
    <property type="entry name" value="Transmembrane di-heme cytochromes"/>
    <property type="match status" value="1"/>
</dbReference>
<dbReference type="PROSITE" id="PS51003">
    <property type="entry name" value="CYTB_CTER"/>
    <property type="match status" value="1"/>
</dbReference>
<dbReference type="PROSITE" id="PS51002">
    <property type="entry name" value="CYTB_NTER"/>
    <property type="match status" value="1"/>
</dbReference>
<protein>
    <recommendedName>
        <fullName>Cytochrome b</fullName>
    </recommendedName>
    <alternativeName>
        <fullName>Complex III subunit 3</fullName>
    </alternativeName>
    <alternativeName>
        <fullName>Complex III subunit III</fullName>
    </alternativeName>
    <alternativeName>
        <fullName>Cytochrome b-c1 complex subunit 3</fullName>
    </alternativeName>
    <alternativeName>
        <fullName>Ubiquinol-cytochrome-c reductase complex cytochrome b subunit</fullName>
    </alternativeName>
</protein>
<sequence length="368" mass="41595">MVSRTLSLSMSLFRAHLVFYRCALNLNSSYNFGFLVAMTFVLQIITGITLAFRYTSEASCAFASVQHLVREVAAGWEFRMLHATTASFVFLCILIHMTRGLYNWSYSYLTTAWMSGLVLYLLTIATAFLGYVLPWGQMSFWGATVITNLLSPIPYLVPWLLGGYYVSDVTLKRFFVLHFILPFIGCIIIVLHIFYLHLNGSSNPAGIDTALKVAFYPHMLMTDAKCLSYLIGLIFLQAAFGLMELSHPDNSIPVNRFVTPLHIVPEWYFLAYYAVLKVIPSKTGGLLVFMSSLINLGLLSEIRALNTRMLIRQQFMTRNVVSGWVIIWVYSMIFLIIIGSAIPQATYILYGRLATILYLTTGLVLCLY</sequence>
<proteinExistence type="evidence at transcript level"/>
<organism>
    <name type="scientific">Toxoplasma gondii</name>
    <dbReference type="NCBI Taxonomy" id="5811"/>
    <lineage>
        <taxon>Eukaryota</taxon>
        <taxon>Sar</taxon>
        <taxon>Alveolata</taxon>
        <taxon>Apicomplexa</taxon>
        <taxon>Conoidasida</taxon>
        <taxon>Coccidia</taxon>
        <taxon>Eucoccidiorida</taxon>
        <taxon>Eimeriorina</taxon>
        <taxon>Sarcocystidae</taxon>
        <taxon>Toxoplasma</taxon>
    </lineage>
</organism>
<reference key="1">
    <citation type="submission" date="1997-07" db="EMBL/GenBank/DDBJ databases">
        <title>Cytochrome B of Toxoplasma gondii.</title>
        <authorList>
            <person name="Toursel C."/>
            <person name="Tomavo S."/>
        </authorList>
    </citation>
    <scope>NUCLEOTIDE SEQUENCE [MRNA]</scope>
</reference>
<reference key="2">
    <citation type="submission" date="1998-09" db="EMBL/GenBank/DDBJ databases">
        <title>Cytochrome B gene from Toxoplasma gondii.</title>
        <authorList>
            <person name="McFadden D.C."/>
            <person name="Boothroyd J.C."/>
        </authorList>
    </citation>
    <scope>NUCLEOTIDE SEQUENCE [MRNA] OF 10-368</scope>
    <source>
        <strain>RH</strain>
    </source>
</reference>
<feature type="chain" id="PRO_0000061672" description="Cytochrome b">
    <location>
        <begin position="1"/>
        <end position="368"/>
    </location>
</feature>
<feature type="transmembrane region" description="Helical" evidence="3">
    <location>
        <begin position="32"/>
        <end position="52"/>
    </location>
</feature>
<feature type="transmembrane region" description="Helical" evidence="3">
    <location>
        <begin position="76"/>
        <end position="98"/>
    </location>
</feature>
<feature type="transmembrane region" description="Helical" evidence="3">
    <location>
        <begin position="112"/>
        <end position="132"/>
    </location>
</feature>
<feature type="transmembrane region" description="Helical" evidence="3">
    <location>
        <begin position="174"/>
        <end position="194"/>
    </location>
</feature>
<feature type="transmembrane region" description="Helical" evidence="3">
    <location>
        <begin position="219"/>
        <end position="239"/>
    </location>
</feature>
<feature type="transmembrane region" description="Helical" evidence="4">
    <location>
        <begin position="285"/>
        <end position="305"/>
    </location>
</feature>
<feature type="transmembrane region" description="Helical" evidence="4">
    <location>
        <begin position="323"/>
        <end position="343"/>
    </location>
</feature>
<feature type="transmembrane region" description="Helical" evidence="4">
    <location>
        <begin position="347"/>
        <end position="367"/>
    </location>
</feature>
<feature type="binding site" description="axial binding residue" evidence="3">
    <location>
        <position position="82"/>
    </location>
    <ligand>
        <name>heme b</name>
        <dbReference type="ChEBI" id="CHEBI:60344"/>
        <label>b562</label>
    </ligand>
    <ligandPart>
        <name>Fe</name>
        <dbReference type="ChEBI" id="CHEBI:18248"/>
    </ligandPart>
</feature>
<feature type="binding site" description="axial binding residue" evidence="3">
    <location>
        <position position="96"/>
    </location>
    <ligand>
        <name>heme b</name>
        <dbReference type="ChEBI" id="CHEBI:60344"/>
        <label>b566</label>
    </ligand>
    <ligandPart>
        <name>Fe</name>
        <dbReference type="ChEBI" id="CHEBI:18248"/>
    </ligandPart>
</feature>
<feature type="binding site" description="axial binding residue" evidence="3">
    <location>
        <position position="178"/>
    </location>
    <ligand>
        <name>heme b</name>
        <dbReference type="ChEBI" id="CHEBI:60344"/>
        <label>b562</label>
    </ligand>
    <ligandPart>
        <name>Fe</name>
        <dbReference type="ChEBI" id="CHEBI:18248"/>
    </ligandPart>
</feature>
<feature type="binding site" description="axial binding residue" evidence="3">
    <location>
        <position position="192"/>
    </location>
    <ligand>
        <name>heme b</name>
        <dbReference type="ChEBI" id="CHEBI:60344"/>
        <label>b566</label>
    </ligand>
    <ligandPart>
        <name>Fe</name>
        <dbReference type="ChEBI" id="CHEBI:18248"/>
    </ligandPart>
</feature>
<feature type="binding site" evidence="2">
    <location>
        <position position="197"/>
    </location>
    <ligand>
        <name>a ubiquinone</name>
        <dbReference type="ChEBI" id="CHEBI:16389"/>
    </ligand>
</feature>
<keyword id="KW-0249">Electron transport</keyword>
<keyword id="KW-0349">Heme</keyword>
<keyword id="KW-0408">Iron</keyword>
<keyword id="KW-0472">Membrane</keyword>
<keyword id="KW-0479">Metal-binding</keyword>
<keyword id="KW-0496">Mitochondrion</keyword>
<keyword id="KW-0999">Mitochondrion inner membrane</keyword>
<keyword id="KW-0679">Respiratory chain</keyword>
<keyword id="KW-0812">Transmembrane</keyword>
<keyword id="KW-1133">Transmembrane helix</keyword>
<keyword id="KW-0813">Transport</keyword>
<keyword id="KW-0830">Ubiquinone</keyword>
<comment type="function">
    <text evidence="3">Component of the ubiquinol-cytochrome c reductase complex (complex III or cytochrome b-c1 complex) that is part of the mitochondrial respiratory chain. The b-c1 complex mediates electron transfer from ubiquinol to cytochrome c. Contributes to the generation of a proton gradient across the mitochondrial membrane that is then used for ATP synthesis.</text>
</comment>
<comment type="cofactor">
    <cofactor evidence="3">
        <name>heme b</name>
        <dbReference type="ChEBI" id="CHEBI:60344"/>
    </cofactor>
    <text evidence="3">Binds 2 heme b groups non-covalently.</text>
</comment>
<comment type="subunit">
    <text evidence="1">The main subunits of complex b-c1 are: cytochrome b, cytochrome c1 and the Rieske protein.</text>
</comment>
<comment type="subcellular location">
    <subcellularLocation>
        <location evidence="3">Mitochondrion inner membrane</location>
        <topology evidence="3">Multi-pass membrane protein</topology>
    </subcellularLocation>
</comment>
<comment type="miscellaneous">
    <text evidence="1">Heme 1 (or BL or b562) is low-potential and absorbs at about 562 nm, and heme 2 (or BH or b566) is high-potential and absorbs at about 566 nm.</text>
</comment>
<comment type="similarity">
    <text evidence="5 6">Belongs to the cytochrome b family.</text>
</comment>
<comment type="caution">
    <text evidence="3">The protein contains an even number of transmembrane helices, fewer than predicted by bioinformatics tools.</text>
</comment>